<feature type="chain" id="PRO_0000194959" description="NEDD8-activating enzyme E1 regulatory subunit">
    <location>
        <begin position="1"/>
        <end position="541"/>
    </location>
</feature>
<reference key="1">
    <citation type="journal article" date="1998" name="Science">
        <title>Genome sequence of the nematode C. elegans: a platform for investigating biology.</title>
        <authorList>
            <consortium name="The C. elegans sequencing consortium"/>
        </authorList>
    </citation>
    <scope>NUCLEOTIDE SEQUENCE [LARGE SCALE GENOMIC DNA]</scope>
    <source>
        <strain>Bristol N2</strain>
    </source>
</reference>
<reference key="2">
    <citation type="journal article" date="2000" name="Dev. Biol.">
        <title>The NED-8 conjugating system in Caenorhabditis elegans is required for embryogenesis and terminal differentiation of the hypodermis.</title>
        <authorList>
            <person name="Jones D."/>
            <person name="Candido E.P.M."/>
        </authorList>
    </citation>
    <scope>IDENTIFICATION</scope>
    <scope>NOMENCLATURE</scope>
    <scope>FUNCTION</scope>
    <scope>DISRUPTION PHENOTYPE</scope>
</reference>
<reference key="3">
    <citation type="journal article" date="2009" name="Genetics">
        <title>Using RNA interference to identify specific modifiers of a temperature-sensitive, embryonic-lethal mutation in the Caenorhabditis elegans ubiquitin-like Nedd8 protein modification pathway E1-activating gene rfl-1.</title>
        <authorList>
            <person name="Dorfman M."/>
            <person name="Gomes J.E."/>
            <person name="O'Rourke S."/>
            <person name="Bowerman B."/>
        </authorList>
    </citation>
    <scope>FUNCTION</scope>
    <scope>DISRUPTION PHENOTYPE</scope>
</reference>
<keyword id="KW-1185">Reference proteome</keyword>
<keyword id="KW-0833">Ubl conjugation pathway</keyword>
<sequence>MLPFDPSTRYDRQVRLWGEEGQASIGSTSACVLGSDSLATEILKSLVLAGVQSFYVVDDAKVEQADIGQNFFLHADDIGRSRAEATLEKLTELNPSVSGSASSQPPTALAMEDVEKLTTFSVVVAANQNEEIDTTFAKVLYNIRVPFICIKTFGLIGTIRICIKEHTIANSHEENPRPDLRLDAPFSKLIEMINETNLDEMTLEQLRHTPYILLHFKALEVFRKQRNDPEAFPSTTAERKELQAILMSFRRSSEESGTKDSENFDEAKAAVIRAFQRTTIGSSVKSILSSPQCSTSTRPFWLICEALRRFVTENNNLLPLRGTLPDMTSDSSRYTRLATLFHEKALSDAQEVLRLTREVEKERGVGDVISDDVCYRFCKNADRIRVQYGDVLDYNEETKAIVEKIRESNIDEETRNQKVDEATWMLLMRAVGRFQKEKGRYPGTNGVPVSIDAQDLKKRVEVLIREALKDEQDFTSISNKVTDTAIAEICRFGAAELHVISSYVGGIAAQEIIKLATNQYVPIDNTFIFDGHTQESATFKF</sequence>
<proteinExistence type="inferred from homology"/>
<gene>
    <name type="primary">ula-1</name>
    <name type="ORF">C26E6.8</name>
</gene>
<accession>Q18217</accession>
<organism>
    <name type="scientific">Caenorhabditis elegans</name>
    <dbReference type="NCBI Taxonomy" id="6239"/>
    <lineage>
        <taxon>Eukaryota</taxon>
        <taxon>Metazoa</taxon>
        <taxon>Ecdysozoa</taxon>
        <taxon>Nematoda</taxon>
        <taxon>Chromadorea</taxon>
        <taxon>Rhabditida</taxon>
        <taxon>Rhabditina</taxon>
        <taxon>Rhabditomorpha</taxon>
        <taxon>Rhabditoidea</taxon>
        <taxon>Rhabditidae</taxon>
        <taxon>Peloderinae</taxon>
        <taxon>Caenorhabditis</taxon>
    </lineage>
</organism>
<dbReference type="EMBL" id="FO080680">
    <property type="protein sequence ID" value="CCD65733.1"/>
    <property type="molecule type" value="Genomic_DNA"/>
</dbReference>
<dbReference type="PIR" id="F88444">
    <property type="entry name" value="F88444"/>
</dbReference>
<dbReference type="RefSeq" id="NP_498037.2">
    <property type="nucleotide sequence ID" value="NM_065636.4"/>
</dbReference>
<dbReference type="SMR" id="Q18217"/>
<dbReference type="BioGRID" id="57300">
    <property type="interactions" value="3"/>
</dbReference>
<dbReference type="FunCoup" id="Q18217">
    <property type="interactions" value="3073"/>
</dbReference>
<dbReference type="IntAct" id="Q18217">
    <property type="interactions" value="1"/>
</dbReference>
<dbReference type="STRING" id="6239.C26E6.8b.1"/>
<dbReference type="PaxDb" id="6239-C26E6.8"/>
<dbReference type="PeptideAtlas" id="Q18217"/>
<dbReference type="EnsemblMetazoa" id="C26E6.8a.1">
    <property type="protein sequence ID" value="C26E6.8a.1"/>
    <property type="gene ID" value="WBGene00006735"/>
</dbReference>
<dbReference type="GeneID" id="266650"/>
<dbReference type="KEGG" id="cel:CELE_C26E6.8"/>
<dbReference type="UCSC" id="C26E6.8.1">
    <property type="organism name" value="c. elegans"/>
</dbReference>
<dbReference type="AGR" id="WB:WBGene00006735"/>
<dbReference type="CTD" id="266650"/>
<dbReference type="WormBase" id="C26E6.8a">
    <property type="protein sequence ID" value="CE29678"/>
    <property type="gene ID" value="WBGene00006735"/>
    <property type="gene designation" value="ula-1"/>
</dbReference>
<dbReference type="eggNOG" id="KOG2016">
    <property type="taxonomic scope" value="Eukaryota"/>
</dbReference>
<dbReference type="GeneTree" id="ENSGT00550000074901"/>
<dbReference type="HOGENOM" id="CLU_019618_2_1_1"/>
<dbReference type="InParanoid" id="Q18217"/>
<dbReference type="OMA" id="KLITHQY"/>
<dbReference type="OrthoDB" id="1708823at2759"/>
<dbReference type="PhylomeDB" id="Q18217"/>
<dbReference type="Reactome" id="R-CEL-8951664">
    <property type="pathway name" value="Neddylation"/>
</dbReference>
<dbReference type="UniPathway" id="UPA00885"/>
<dbReference type="PRO" id="PR:Q18217"/>
<dbReference type="Proteomes" id="UP000001940">
    <property type="component" value="Chromosome III"/>
</dbReference>
<dbReference type="Bgee" id="WBGene00006735">
    <property type="expression patterns" value="Expressed in germ line (C elegans) and 4 other cell types or tissues"/>
</dbReference>
<dbReference type="ExpressionAtlas" id="Q18217">
    <property type="expression patterns" value="baseline and differential"/>
</dbReference>
<dbReference type="GO" id="GO:0005737">
    <property type="term" value="C:cytoplasm"/>
    <property type="evidence" value="ECO:0000318"/>
    <property type="project" value="GO_Central"/>
</dbReference>
<dbReference type="GO" id="GO:0019781">
    <property type="term" value="F:NEDD8 activating enzyme activity"/>
    <property type="evidence" value="ECO:0000318"/>
    <property type="project" value="GO_Central"/>
</dbReference>
<dbReference type="GO" id="GO:0043518">
    <property type="term" value="P:negative regulation of DNA damage response, signal transduction by p53 class mediator"/>
    <property type="evidence" value="ECO:0000315"/>
    <property type="project" value="UniProtKB"/>
</dbReference>
<dbReference type="GO" id="GO:0045116">
    <property type="term" value="P:protein neddylation"/>
    <property type="evidence" value="ECO:0000318"/>
    <property type="project" value="GO_Central"/>
</dbReference>
<dbReference type="CDD" id="cd01493">
    <property type="entry name" value="APPBP1_RUB"/>
    <property type="match status" value="1"/>
</dbReference>
<dbReference type="FunFam" id="3.40.50.720:FF:001230">
    <property type="entry name" value="NEDD8-activating enzyme E1 regulatory subunit"/>
    <property type="match status" value="1"/>
</dbReference>
<dbReference type="FunFam" id="3.40.50.720:FF:001293">
    <property type="entry name" value="NEDD8-activating enzyme E1 regulatory subunit"/>
    <property type="match status" value="1"/>
</dbReference>
<dbReference type="Gene3D" id="3.40.50.720">
    <property type="entry name" value="NAD(P)-binding Rossmann-like Domain"/>
    <property type="match status" value="2"/>
</dbReference>
<dbReference type="InterPro" id="IPR030667">
    <property type="entry name" value="APP-BP1"/>
</dbReference>
<dbReference type="InterPro" id="IPR045886">
    <property type="entry name" value="ThiF/MoeB/HesA"/>
</dbReference>
<dbReference type="InterPro" id="IPR000594">
    <property type="entry name" value="ThiF_NAD_FAD-bd"/>
</dbReference>
<dbReference type="InterPro" id="IPR035985">
    <property type="entry name" value="Ubiquitin-activating_enz"/>
</dbReference>
<dbReference type="PANTHER" id="PTHR10953:SF29">
    <property type="entry name" value="NEDD8-ACTIVATING ENZYME E1 REGULATORY SUBUNIT"/>
    <property type="match status" value="1"/>
</dbReference>
<dbReference type="PANTHER" id="PTHR10953">
    <property type="entry name" value="UBIQUITIN-ACTIVATING ENZYME E1"/>
    <property type="match status" value="1"/>
</dbReference>
<dbReference type="Pfam" id="PF00899">
    <property type="entry name" value="ThiF"/>
    <property type="match status" value="1"/>
</dbReference>
<dbReference type="PIRSF" id="PIRSF039099">
    <property type="entry name" value="APP-BP1"/>
    <property type="match status" value="1"/>
</dbReference>
<dbReference type="SUPFAM" id="SSF69572">
    <property type="entry name" value="Activating enzymes of the ubiquitin-like proteins"/>
    <property type="match status" value="1"/>
</dbReference>
<name>ULA1_CAEEL</name>
<protein>
    <recommendedName>
        <fullName>NEDD8-activating enzyme E1 regulatory subunit</fullName>
    </recommendedName>
    <alternativeName>
        <fullName>Ubiquitin-like activation protein 1</fullName>
    </alternativeName>
</protein>
<evidence type="ECO:0000250" key="1"/>
<evidence type="ECO:0000269" key="2">
    <source>
    </source>
</evidence>
<evidence type="ECO:0000269" key="3">
    <source>
    </source>
</evidence>
<evidence type="ECO:0000305" key="4"/>
<comment type="function">
    <text evidence="2 3">Regulatory subunit of the dimeric uba-3-ula-1 E1 enzyme. E1 activates NEDD8 by first adenylating its C-terminal glycine residue with ATP, thereafter linking this residue to the side chain of the catalytic cysteine, yielding a NEDD8-rfl-1 (uba-3) thioester and free AMP. E1 finally transfers NEDD8 to the catalytic cysteine of ubc-12 (PubMed:10993680). Required for rfl-1 (uba-3) nuclear localization during early embryonic development (PubMed:19528325).</text>
</comment>
<comment type="pathway">
    <text>Protein modification; protein neddylation.</text>
</comment>
<comment type="subunit">
    <text evidence="1">Heterodimer of uba-3 and ula-1. The complex binds NEDD8 and ubc-12 (By similarity).</text>
</comment>
<comment type="disruption phenotype">
    <text evidence="2 3">RNAi-mediated knockdown causes the formation of an everted vulva in the L4 stage, with the subsequent rupture of the animal during the L4-to-adult molt (PubMed:10993680). Loss of rfl-1 nuclear localization in a 1- to 2-cell embryonic stages (PubMed:19528325).</text>
</comment>
<comment type="similarity">
    <text evidence="4">Belongs to the ubiquitin-activating E1 family. ULA1 subfamily.</text>
</comment>